<proteinExistence type="evidence at protein level"/>
<evidence type="ECO:0000255" key="1">
    <source>
        <dbReference type="PROSITE-ProRule" id="PRU00042"/>
    </source>
</evidence>
<evidence type="ECO:0000256" key="2">
    <source>
        <dbReference type="SAM" id="MobiDB-lite"/>
    </source>
</evidence>
<evidence type="ECO:0000269" key="3">
    <source>
    </source>
</evidence>
<evidence type="ECO:0000269" key="4">
    <source>
    </source>
</evidence>
<evidence type="ECO:0000303" key="5">
    <source>
    </source>
</evidence>
<evidence type="ECO:0000303" key="6">
    <source>
    </source>
</evidence>
<evidence type="ECO:0000305" key="7"/>
<evidence type="ECO:0000312" key="8">
    <source>
        <dbReference type="HGNC" id="HGNC:12927"/>
    </source>
</evidence>
<evidence type="ECO:0007744" key="9">
    <source>
    </source>
</evidence>
<evidence type="ECO:0007744" key="10">
    <source>
    </source>
</evidence>
<evidence type="ECO:0007744" key="11">
    <source>
    </source>
</evidence>
<reference key="1">
    <citation type="journal article" date="1996" name="DNA Res.">
        <title>Prediction of the coding sequences of unidentified human genes. VI. The coding sequences of 80 new genes (KIAA0201-KIAA0280) deduced by analysis of cDNA clones from cell line KG-1 and brain.</title>
        <authorList>
            <person name="Nagase T."/>
            <person name="Seki N."/>
            <person name="Ishikawa K."/>
            <person name="Ohira M."/>
            <person name="Kawarabayasi Y."/>
            <person name="Ohara O."/>
            <person name="Tanaka A."/>
            <person name="Kotani H."/>
            <person name="Miyajima N."/>
            <person name="Nomura N."/>
        </authorList>
    </citation>
    <scope>NUCLEOTIDE SEQUENCE [LARGE SCALE MRNA]</scope>
    <scope>VARIANT GLY-751</scope>
    <source>
        <tissue>Bone marrow</tissue>
    </source>
</reference>
<reference key="2">
    <citation type="journal article" date="2005" name="Nature">
        <title>Generation and annotation of the DNA sequences of human chromosomes 2 and 4.</title>
        <authorList>
            <person name="Hillier L.W."/>
            <person name="Graves T.A."/>
            <person name="Fulton R.S."/>
            <person name="Fulton L.A."/>
            <person name="Pepin K.H."/>
            <person name="Minx P."/>
            <person name="Wagner-McPherson C."/>
            <person name="Layman D."/>
            <person name="Wylie K."/>
            <person name="Sekhon M."/>
            <person name="Becker M.C."/>
            <person name="Fewell G.A."/>
            <person name="Delehaunty K.D."/>
            <person name="Miner T.L."/>
            <person name="Nash W.E."/>
            <person name="Kremitzki C."/>
            <person name="Oddy L."/>
            <person name="Du H."/>
            <person name="Sun H."/>
            <person name="Bradshaw-Cordum H."/>
            <person name="Ali J."/>
            <person name="Carter J."/>
            <person name="Cordes M."/>
            <person name="Harris A."/>
            <person name="Isak A."/>
            <person name="van Brunt A."/>
            <person name="Nguyen C."/>
            <person name="Du F."/>
            <person name="Courtney L."/>
            <person name="Kalicki J."/>
            <person name="Ozersky P."/>
            <person name="Abbott S."/>
            <person name="Armstrong J."/>
            <person name="Belter E.A."/>
            <person name="Caruso L."/>
            <person name="Cedroni M."/>
            <person name="Cotton M."/>
            <person name="Davidson T."/>
            <person name="Desai A."/>
            <person name="Elliott G."/>
            <person name="Erb T."/>
            <person name="Fronick C."/>
            <person name="Gaige T."/>
            <person name="Haakenson W."/>
            <person name="Haglund K."/>
            <person name="Holmes A."/>
            <person name="Harkins R."/>
            <person name="Kim K."/>
            <person name="Kruchowski S.S."/>
            <person name="Strong C.M."/>
            <person name="Grewal N."/>
            <person name="Goyea E."/>
            <person name="Hou S."/>
            <person name="Levy A."/>
            <person name="Martinka S."/>
            <person name="Mead K."/>
            <person name="McLellan M.D."/>
            <person name="Meyer R."/>
            <person name="Randall-Maher J."/>
            <person name="Tomlinson C."/>
            <person name="Dauphin-Kohlberg S."/>
            <person name="Kozlowicz-Reilly A."/>
            <person name="Shah N."/>
            <person name="Swearengen-Shahid S."/>
            <person name="Snider J."/>
            <person name="Strong J.T."/>
            <person name="Thompson J."/>
            <person name="Yoakum M."/>
            <person name="Leonard S."/>
            <person name="Pearman C."/>
            <person name="Trani L."/>
            <person name="Radionenko M."/>
            <person name="Waligorski J.E."/>
            <person name="Wang C."/>
            <person name="Rock S.M."/>
            <person name="Tin-Wollam A.-M."/>
            <person name="Maupin R."/>
            <person name="Latreille P."/>
            <person name="Wendl M.C."/>
            <person name="Yang S.-P."/>
            <person name="Pohl C."/>
            <person name="Wallis J.W."/>
            <person name="Spieth J."/>
            <person name="Bieri T.A."/>
            <person name="Berkowicz N."/>
            <person name="Nelson J.O."/>
            <person name="Osborne J."/>
            <person name="Ding L."/>
            <person name="Meyer R."/>
            <person name="Sabo A."/>
            <person name="Shotland Y."/>
            <person name="Sinha P."/>
            <person name="Wohldmann P.E."/>
            <person name="Cook L.L."/>
            <person name="Hickenbotham M.T."/>
            <person name="Eldred J."/>
            <person name="Williams D."/>
            <person name="Jones T.A."/>
            <person name="She X."/>
            <person name="Ciccarelli F.D."/>
            <person name="Izaurralde E."/>
            <person name="Taylor J."/>
            <person name="Schmutz J."/>
            <person name="Myers R.M."/>
            <person name="Cox D.R."/>
            <person name="Huang X."/>
            <person name="McPherson J.D."/>
            <person name="Mardis E.R."/>
            <person name="Clifton S.W."/>
            <person name="Warren W.C."/>
            <person name="Chinwalla A.T."/>
            <person name="Eddy S.R."/>
            <person name="Marra M.A."/>
            <person name="Ovcharenko I."/>
            <person name="Furey T.S."/>
            <person name="Miller W."/>
            <person name="Eichler E.E."/>
            <person name="Bork P."/>
            <person name="Suyama M."/>
            <person name="Torrents D."/>
            <person name="Waterston R.H."/>
            <person name="Wilson R.K."/>
        </authorList>
    </citation>
    <scope>NUCLEOTIDE SEQUENCE [LARGE SCALE GENOMIC DNA]</scope>
</reference>
<reference key="3">
    <citation type="journal article" date="1995" name="Genomics">
        <title>Isolation and fine mapping of 16 novel human zinc finger-encoding cDNAs identify putative candidate genes for developmental and malignant disorders.</title>
        <authorList>
            <person name="Tommerup N."/>
            <person name="Vissing H."/>
        </authorList>
    </citation>
    <scope>NUCLEOTIDE SEQUENCE [MRNA] OF 460-632</scope>
    <source>
        <tissue>Insulinoma</tissue>
    </source>
</reference>
<reference key="4">
    <citation type="journal article" date="2013" name="J. Proteome Res.">
        <title>Toward a comprehensive characterization of a human cancer cell phosphoproteome.</title>
        <authorList>
            <person name="Zhou H."/>
            <person name="Di Palma S."/>
            <person name="Preisinger C."/>
            <person name="Peng M."/>
            <person name="Polat A.N."/>
            <person name="Heck A.J."/>
            <person name="Mohammed S."/>
        </authorList>
    </citation>
    <scope>PHOSPHORYLATION [LARGE SCALE ANALYSIS] AT SER-154</scope>
    <scope>IDENTIFICATION BY MASS SPECTROMETRY [LARGE SCALE ANALYSIS]</scope>
    <source>
        <tissue>Cervix carcinoma</tissue>
    </source>
</reference>
<reference key="5">
    <citation type="journal article" date="2014" name="Nat. Struct. Mol. Biol.">
        <title>Uncovering global SUMOylation signaling networks in a site-specific manner.</title>
        <authorList>
            <person name="Hendriks I.A."/>
            <person name="D'Souza R.C."/>
            <person name="Yang B."/>
            <person name="Verlaan-de Vries M."/>
            <person name="Mann M."/>
            <person name="Vertegaal A.C."/>
        </authorList>
    </citation>
    <scope>SUMOYLATION [LARGE SCALE ANALYSIS] AT LYS-594</scope>
    <scope>IDENTIFICATION BY MASS SPECTROMETRY [LARGE SCALE ANALYSIS]</scope>
</reference>
<reference key="6">
    <citation type="journal article" date="2017" name="Nat. Struct. Mol. Biol.">
        <title>Site-specific mapping of the human SUMO proteome reveals co-modification with phosphorylation.</title>
        <authorList>
            <person name="Hendriks I.A."/>
            <person name="Lyon D."/>
            <person name="Young C."/>
            <person name="Jensen L.J."/>
            <person name="Vertegaal A.C."/>
            <person name="Nielsen M.L."/>
        </authorList>
    </citation>
    <scope>SUMOYLATION [LARGE SCALE ANALYSIS] AT LYS-1193; LYS-1242 AND LYS-1591</scope>
    <scope>IDENTIFICATION BY MASS SPECTROMETRY [LARGE SCALE ANALYSIS]</scope>
</reference>
<reference key="7">
    <citation type="journal article" date="2019" name="Genet. Med.">
        <title>Recessive variants in ZNF142 cause a complex neurodevelopmental disorder with intellectual disability, speech impairment, seizures, and dystonia.</title>
        <authorList>
            <person name="Khan K."/>
            <person name="Zech M."/>
            <person name="Morgan A.T."/>
            <person name="Amor D.J."/>
            <person name="Skorvanek M."/>
            <person name="Khan T.N."/>
            <person name="Hildebrand M.S."/>
            <person name="Jackson V.E."/>
            <person name="Scerri T.S."/>
            <person name="Coleman M."/>
            <person name="Rigbye K.A."/>
            <person name="Scheffer I.E."/>
            <person name="Bahlo M."/>
            <person name="Wagner M."/>
            <person name="Lam D.D."/>
            <person name="Berutti R."/>
            <person name="Havrankova P."/>
            <person name="Fecikova A."/>
            <person name="Strom T.M."/>
            <person name="Han V."/>
            <person name="Dosekova P."/>
            <person name="Gdovinova Z."/>
            <person name="Laccone F."/>
            <person name="Jameel M."/>
            <person name="Mooney M.R."/>
            <person name="Baig S.M."/>
            <person name="Jech R."/>
            <person name="Davis E.E."/>
            <person name="Katsanis N."/>
            <person name="Winkelmann J."/>
        </authorList>
    </citation>
    <scope>INVOLVEMENT IN NEDISHM</scope>
    <scope>VARIANTS NEDISHM 1059-ARG--GLY-1687 DEL; PHE-1233; 1395-LEU--GLY-1687 DEL AND THR-1500</scope>
</reference>
<keyword id="KW-0225">Disease variant</keyword>
<keyword id="KW-0238">DNA-binding</keyword>
<keyword id="KW-0991">Intellectual disability</keyword>
<keyword id="KW-1017">Isopeptide bond</keyword>
<keyword id="KW-0479">Metal-binding</keyword>
<keyword id="KW-0539">Nucleus</keyword>
<keyword id="KW-0597">Phosphoprotein</keyword>
<keyword id="KW-1267">Proteomics identification</keyword>
<keyword id="KW-1185">Reference proteome</keyword>
<keyword id="KW-0677">Repeat</keyword>
<keyword id="KW-0804">Transcription</keyword>
<keyword id="KW-0805">Transcription regulation</keyword>
<keyword id="KW-0832">Ubl conjugation</keyword>
<keyword id="KW-0862">Zinc</keyword>
<keyword id="KW-0863">Zinc-finger</keyword>
<organism>
    <name type="scientific">Homo sapiens</name>
    <name type="common">Human</name>
    <dbReference type="NCBI Taxonomy" id="9606"/>
    <lineage>
        <taxon>Eukaryota</taxon>
        <taxon>Metazoa</taxon>
        <taxon>Chordata</taxon>
        <taxon>Craniata</taxon>
        <taxon>Vertebrata</taxon>
        <taxon>Euteleostomi</taxon>
        <taxon>Mammalia</taxon>
        <taxon>Eutheria</taxon>
        <taxon>Euarchontoglires</taxon>
        <taxon>Primates</taxon>
        <taxon>Haplorrhini</taxon>
        <taxon>Catarrhini</taxon>
        <taxon>Hominidae</taxon>
        <taxon>Homo</taxon>
    </lineage>
</organism>
<name>ZN142_HUMAN</name>
<protein>
    <recommendedName>
        <fullName evidence="7">Zinc finger protein 142</fullName>
    </recommendedName>
</protein>
<dbReference type="EMBL" id="D87073">
    <property type="protein sequence ID" value="BAA13242.2"/>
    <property type="status" value="ALT_INIT"/>
    <property type="molecule type" value="mRNA"/>
</dbReference>
<dbReference type="EMBL" id="AC012510">
    <property type="status" value="NOT_ANNOTATED_CDS"/>
    <property type="molecule type" value="Genomic_DNA"/>
</dbReference>
<dbReference type="EMBL" id="U09849">
    <property type="protein sequence ID" value="AAC50265.1"/>
    <property type="molecule type" value="mRNA"/>
</dbReference>
<dbReference type="CCDS" id="CCDS42817.1"/>
<dbReference type="PIR" id="I38617">
    <property type="entry name" value="I38617"/>
</dbReference>
<dbReference type="RefSeq" id="NP_001099007.1">
    <property type="nucleotide sequence ID" value="NM_001105537.4"/>
</dbReference>
<dbReference type="RefSeq" id="NP_001353220.1">
    <property type="nucleotide sequence ID" value="NM_001366291.2"/>
</dbReference>
<dbReference type="RefSeq" id="NP_001366591.1">
    <property type="nucleotide sequence ID" value="NM_001379662.1"/>
</dbReference>
<dbReference type="RefSeq" id="XP_011510091.1">
    <property type="nucleotide sequence ID" value="XM_011511789.2"/>
</dbReference>
<dbReference type="RefSeq" id="XP_016860361.1">
    <property type="nucleotide sequence ID" value="XM_017004872.1"/>
</dbReference>
<dbReference type="RefSeq" id="XP_047301734.1">
    <property type="nucleotide sequence ID" value="XM_047445778.1"/>
</dbReference>
<dbReference type="RefSeq" id="XP_047301735.1">
    <property type="nucleotide sequence ID" value="XM_047445779.1"/>
</dbReference>
<dbReference type="RefSeq" id="XP_047301736.1">
    <property type="nucleotide sequence ID" value="XM_047445780.1"/>
</dbReference>
<dbReference type="RefSeq" id="XP_047301737.1">
    <property type="nucleotide sequence ID" value="XM_047445781.1"/>
</dbReference>
<dbReference type="RefSeq" id="XP_047301738.1">
    <property type="nucleotide sequence ID" value="XM_047445782.1"/>
</dbReference>
<dbReference type="BioGRID" id="113495">
    <property type="interactions" value="20"/>
</dbReference>
<dbReference type="FunCoup" id="P52746">
    <property type="interactions" value="1101"/>
</dbReference>
<dbReference type="IntAct" id="P52746">
    <property type="interactions" value="11"/>
</dbReference>
<dbReference type="STRING" id="9606.ENSP00000398798"/>
<dbReference type="GlyGen" id="P52746">
    <property type="glycosylation" value="4 sites, 1 O-linked glycan (3 sites)"/>
</dbReference>
<dbReference type="iPTMnet" id="P52746"/>
<dbReference type="PhosphoSitePlus" id="P52746"/>
<dbReference type="BioMuta" id="ZNF142"/>
<dbReference type="DMDM" id="313104298"/>
<dbReference type="jPOST" id="P52746"/>
<dbReference type="MassIVE" id="P52746"/>
<dbReference type="PaxDb" id="9606-ENSP00000398798"/>
<dbReference type="PeptideAtlas" id="P52746"/>
<dbReference type="ProteomicsDB" id="56521"/>
<dbReference type="Pumba" id="P52746"/>
<dbReference type="Antibodypedia" id="56468">
    <property type="antibodies" value="22 antibodies from 10 providers"/>
</dbReference>
<dbReference type="DNASU" id="7701"/>
<dbReference type="Ensembl" id="ENST00000449707.5">
    <property type="protein sequence ID" value="ENSP00000408643.1"/>
    <property type="gene ID" value="ENSG00000115568.16"/>
</dbReference>
<dbReference type="GeneID" id="7701"/>
<dbReference type="KEGG" id="hsa:7701"/>
<dbReference type="UCSC" id="uc002vin.6">
    <property type="organism name" value="human"/>
</dbReference>
<dbReference type="AGR" id="HGNC:12927"/>
<dbReference type="CTD" id="7701"/>
<dbReference type="DisGeNET" id="7701"/>
<dbReference type="GeneCards" id="ZNF142"/>
<dbReference type="HGNC" id="HGNC:12927">
    <property type="gene designation" value="ZNF142"/>
</dbReference>
<dbReference type="HPA" id="ENSG00000115568">
    <property type="expression patterns" value="Low tissue specificity"/>
</dbReference>
<dbReference type="MalaCards" id="ZNF142"/>
<dbReference type="MIM" id="604083">
    <property type="type" value="gene"/>
</dbReference>
<dbReference type="MIM" id="618425">
    <property type="type" value="phenotype"/>
</dbReference>
<dbReference type="neXtProt" id="NX_P52746"/>
<dbReference type="OpenTargets" id="ENSG00000115568"/>
<dbReference type="Orphanet" id="528084">
    <property type="disease" value="Non-specific syndromic intellectual disability"/>
</dbReference>
<dbReference type="PharmGKB" id="PA37514"/>
<dbReference type="VEuPathDB" id="HostDB:ENSG00000115568"/>
<dbReference type="eggNOG" id="KOG1721">
    <property type="taxonomic scope" value="Eukaryota"/>
</dbReference>
<dbReference type="GeneTree" id="ENSGT00940000163074"/>
<dbReference type="HOGENOM" id="CLU_001774_0_0_1"/>
<dbReference type="InParanoid" id="P52746"/>
<dbReference type="OrthoDB" id="6077919at2759"/>
<dbReference type="PAN-GO" id="P52746">
    <property type="GO annotations" value="4 GO annotations based on evolutionary models"/>
</dbReference>
<dbReference type="PhylomeDB" id="P52746"/>
<dbReference type="TreeFam" id="TF327469"/>
<dbReference type="PathwayCommons" id="P52746"/>
<dbReference type="SignaLink" id="P52746"/>
<dbReference type="BioGRID-ORCS" id="7701">
    <property type="hits" value="10 hits in 1176 CRISPR screens"/>
</dbReference>
<dbReference type="ChiTaRS" id="ZNF142">
    <property type="organism name" value="human"/>
</dbReference>
<dbReference type="GenomeRNAi" id="7701"/>
<dbReference type="Pharos" id="P52746">
    <property type="development level" value="Tdark"/>
</dbReference>
<dbReference type="PRO" id="PR:P52746"/>
<dbReference type="Proteomes" id="UP000005640">
    <property type="component" value="Chromosome 2"/>
</dbReference>
<dbReference type="RNAct" id="P52746">
    <property type="molecule type" value="protein"/>
</dbReference>
<dbReference type="Bgee" id="ENSG00000115568">
    <property type="expression patterns" value="Expressed in cortical plate and 161 other cell types or tissues"/>
</dbReference>
<dbReference type="ExpressionAtlas" id="P52746">
    <property type="expression patterns" value="baseline and differential"/>
</dbReference>
<dbReference type="GO" id="GO:0005634">
    <property type="term" value="C:nucleus"/>
    <property type="evidence" value="ECO:0000318"/>
    <property type="project" value="GO_Central"/>
</dbReference>
<dbReference type="GO" id="GO:0000981">
    <property type="term" value="F:DNA-binding transcription factor activity, RNA polymerase II-specific"/>
    <property type="evidence" value="ECO:0000318"/>
    <property type="project" value="GO_Central"/>
</dbReference>
<dbReference type="GO" id="GO:0000977">
    <property type="term" value="F:RNA polymerase II transcription regulatory region sequence-specific DNA binding"/>
    <property type="evidence" value="ECO:0000318"/>
    <property type="project" value="GO_Central"/>
</dbReference>
<dbReference type="GO" id="GO:0008270">
    <property type="term" value="F:zinc ion binding"/>
    <property type="evidence" value="ECO:0007669"/>
    <property type="project" value="UniProtKB-KW"/>
</dbReference>
<dbReference type="GO" id="GO:0006357">
    <property type="term" value="P:regulation of transcription by RNA polymerase II"/>
    <property type="evidence" value="ECO:0000318"/>
    <property type="project" value="GO_Central"/>
</dbReference>
<dbReference type="FunFam" id="3.30.160.60:FF:004680">
    <property type="match status" value="1"/>
</dbReference>
<dbReference type="FunFam" id="3.30.160.60:FF:000614">
    <property type="entry name" value="Zinc finger protein 142"/>
    <property type="match status" value="1"/>
</dbReference>
<dbReference type="FunFam" id="3.30.160.60:FF:000883">
    <property type="entry name" value="Zinc finger protein 142"/>
    <property type="match status" value="1"/>
</dbReference>
<dbReference type="FunFam" id="3.30.160.60:FF:000891">
    <property type="entry name" value="Zinc finger protein 142"/>
    <property type="match status" value="1"/>
</dbReference>
<dbReference type="FunFam" id="3.30.160.60:FF:001033">
    <property type="entry name" value="Zinc finger protein 142"/>
    <property type="match status" value="1"/>
</dbReference>
<dbReference type="FunFam" id="3.30.160.60:FF:001041">
    <property type="entry name" value="Zinc finger protein 142"/>
    <property type="match status" value="1"/>
</dbReference>
<dbReference type="FunFam" id="3.30.160.60:FF:001062">
    <property type="entry name" value="Zinc finger protein 142"/>
    <property type="match status" value="1"/>
</dbReference>
<dbReference type="FunFam" id="3.30.160.60:FF:001127">
    <property type="entry name" value="Zinc finger protein 142"/>
    <property type="match status" value="1"/>
</dbReference>
<dbReference type="FunFam" id="3.30.160.60:FF:001208">
    <property type="entry name" value="Zinc finger protein 142"/>
    <property type="match status" value="1"/>
</dbReference>
<dbReference type="FunFam" id="3.30.160.60:FF:001516">
    <property type="entry name" value="Zinc finger protein 142"/>
    <property type="match status" value="1"/>
</dbReference>
<dbReference type="FunFam" id="3.30.160.60:FF:001595">
    <property type="entry name" value="Zinc finger protein 142"/>
    <property type="match status" value="1"/>
</dbReference>
<dbReference type="FunFam" id="3.30.160.60:FF:001657">
    <property type="entry name" value="Zinc finger protein 142"/>
    <property type="match status" value="1"/>
</dbReference>
<dbReference type="FunFam" id="3.30.160.60:FF:001707">
    <property type="entry name" value="Zinc finger protein 142"/>
    <property type="match status" value="1"/>
</dbReference>
<dbReference type="FunFam" id="3.30.160.60:FF:001783">
    <property type="entry name" value="Zinc finger protein 142"/>
    <property type="match status" value="1"/>
</dbReference>
<dbReference type="FunFam" id="3.30.160.60:FF:002117">
    <property type="entry name" value="Zinc finger protein 142"/>
    <property type="match status" value="1"/>
</dbReference>
<dbReference type="FunFam" id="3.30.160.60:FF:000803">
    <property type="entry name" value="zinc finger protein 142"/>
    <property type="match status" value="1"/>
</dbReference>
<dbReference type="FunFam" id="3.30.160.60:FF:000994">
    <property type="entry name" value="zinc finger protein 142"/>
    <property type="match status" value="1"/>
</dbReference>
<dbReference type="FunFam" id="3.30.160.60:FF:002452">
    <property type="entry name" value="zinc finger protein 142 isoform X4"/>
    <property type="match status" value="1"/>
</dbReference>
<dbReference type="Gene3D" id="3.30.160.60">
    <property type="entry name" value="Classic Zinc Finger"/>
    <property type="match status" value="19"/>
</dbReference>
<dbReference type="InterPro" id="IPR056438">
    <property type="entry name" value="Znf-C2H2_CTCF"/>
</dbReference>
<dbReference type="InterPro" id="IPR036236">
    <property type="entry name" value="Znf_C2H2_sf"/>
</dbReference>
<dbReference type="InterPro" id="IPR013087">
    <property type="entry name" value="Znf_C2H2_type"/>
</dbReference>
<dbReference type="PANTHER" id="PTHR24379:SF121">
    <property type="entry name" value="C2H2-TYPE DOMAIN-CONTAINING PROTEIN"/>
    <property type="match status" value="1"/>
</dbReference>
<dbReference type="PANTHER" id="PTHR24379">
    <property type="entry name" value="KRAB AND ZINC FINGER DOMAIN-CONTAINING"/>
    <property type="match status" value="1"/>
</dbReference>
<dbReference type="Pfam" id="PF00096">
    <property type="entry name" value="zf-C2H2"/>
    <property type="match status" value="3"/>
</dbReference>
<dbReference type="Pfam" id="PF23611">
    <property type="entry name" value="zf-C2H2_16"/>
    <property type="match status" value="4"/>
</dbReference>
<dbReference type="Pfam" id="PF13912">
    <property type="entry name" value="zf-C2H2_6"/>
    <property type="match status" value="2"/>
</dbReference>
<dbReference type="Pfam" id="PF23612">
    <property type="entry name" value="zf-C2H2_ZN142"/>
    <property type="match status" value="2"/>
</dbReference>
<dbReference type="Pfam" id="PF23574">
    <property type="entry name" value="zf-C2H2_ZNF142_18"/>
    <property type="match status" value="1"/>
</dbReference>
<dbReference type="SMART" id="SM00355">
    <property type="entry name" value="ZnF_C2H2"/>
    <property type="match status" value="36"/>
</dbReference>
<dbReference type="SUPFAM" id="SSF57667">
    <property type="entry name" value="beta-beta-alpha zinc fingers"/>
    <property type="match status" value="12"/>
</dbReference>
<dbReference type="PROSITE" id="PS00028">
    <property type="entry name" value="ZINC_FINGER_C2H2_1"/>
    <property type="match status" value="17"/>
</dbReference>
<dbReference type="PROSITE" id="PS50157">
    <property type="entry name" value="ZINC_FINGER_C2H2_2"/>
    <property type="match status" value="18"/>
</dbReference>
<sequence length="1687" mass="187880">MTDPLLDSQPASSTGEMDGLCPELLLIPPPLSNRGILGPVQSPCPSRDPAPIPTEPGCLLVEATATEEGPGNMEIIVETVAGTLTPGAPGETPAPKLPPGEREPSQEAGTPLPGQETAEEENVEKEEKSDTQKDSQKAVDKGQGAQRLEGDVVSGTESLFKTHMCPECKRCFKKRTHLVEHLHLHFPDPSLQCPNCQKFFTSKSKLKTHLLRELGEKAHHCPLCHYSAVERNALNRHMASMHEDISNFYSDTYACPVCREEFRLSQALKEHLKSHTAAAAAEPLPLRCFQEGCSYAAPDRKAFIKHLKETHGVRAVECRHHSCPMLFATAEAMEAHHKSHYAFHCPHCDFACSNKHLFRKHKKQGHPGSEELRCTFCPFATFNPVAYQDHVGKMHAHEKIHQCPECNFATAHKRVLIRHMLLHTGEKPHKCELCDFTCRDVSYLSKHMLTHSNTKDYMCTECGYVTKWKHYLRVHMRKHAGDLRYQCNQCSYRCHRADQLSSHKLRHQGKSLMCEVCAFACKRKYELQKHMASQHHPGTPAPLYPCHYCSYQSRHKQAVLSHENCKHTRLREFHCALCDYRTFSNTTLLFHKRKAHGYVPGDQAWQLRYASQEPEGAMQGPTPPPDSEPSNQLSARPEGPGHEPGTVVDPSLDQALPEMSEEVNTGRQEGSEAPHGGDLGGSPSPAEVEEGSCTLHLEALGVELESVTEPPLEEVTETAPMEFRPLGLEGPDGLEGPELSSFEGIGTSDLSAEENPLLEKPVSEPSTNPPSLEEAPNNWVGTFKTTPPAETAPLPPLPESESLLKALRRQDKEQAEALVLEGRVQMVVIQGEGRAFRCPHCPFITRREKALNLHSRTGCQGRREPLLCPECGASFKQQRGLSTHLLKKCPVLLRKNKGLPRPDSPIPLQPVLPGTQASEDTESGKPPPASQEAELLLPKDAPLELPREPEETEEPLATVSGSPVPPAGNSLPTEAPKKHCFDPVPPAGNSSPTEAPKKHHLDPVPPAGNSSPTEALKKHRFEQGKFHCNSCPFLCSRLSSITSHVAEGCRGGRGGGGKRGTPQTQPDVSPLSNGDSAPPKNGSTESSSGDGDTVLVQKQKGARFSCPTCPFSCQQERALRTHQIRGCPLEESGELHCSLCPFTAPAATALRLHQKRRHPTAAPARGPRPHLQCGDCGFTCKQSRCMQQHRRLKHEGVKPHQCPFCDFSTTRRYRLEAHQSRHTGIGRIPCSSCPQTFGTNSKLRLHRLRVHDKTPTHFCPLCDYSGYLRHDITRHVNSCHQGTPAFACSQCEAQFSSETALKQHALRRHPEPAQPAPGSPAETTEGPLHCSRCGLLCPSPASLRGHTRKQHPRLECGACQEAFPSRLALDEHRRQQHFSHRCQLCDFAARERVGLVKHYLEQHEETSAAVAASDGDGDAGQPPLHCPFCDFTCRHQLVLDHHVKGHGGTRLYKCTDCAYSTKNRQKITWHSRIHTGEKPYHCHLCPYACADPSRLKYHMRIHKEERKYLCPECGYKCKWVNQLKYHMTKHTGLKPYQCPECEYCTNRADALRVHQETRHREARAFMCEQCGKAFKTRFLLRTHLRKHSEAKPYVCNVCHRAFRWAAGLRHHALTHTDRHPFFCRLCNYKAKQKFQVVKHVRRHHPDQADPNQGVGKDPTTPTVHLHDVQLEDPSPPAPAAPHTGPEG</sequence>
<gene>
    <name evidence="5 8" type="primary">ZNF142</name>
    <name evidence="6" type="synonym">KIAA0236</name>
</gene>
<accession>P52746</accession>
<accession>Q92510</accession>
<comment type="function">
    <text evidence="7">May be involved in transcriptional regulation.</text>
</comment>
<comment type="subcellular location">
    <subcellularLocation>
        <location evidence="7">Nucleus</location>
    </subcellularLocation>
</comment>
<comment type="disease" evidence="3">
    <disease id="DI-05564">
        <name>Neurodevelopmental disorder with impaired speech and hyperkinetic movements</name>
        <acronym>NEDISHM</acronym>
        <description>An autosomal recessive disorder characterized by global developmental delay, impaired intellectual development, delayed walking, poor or absent speech, and a hyperkinetic movement disorder with dystonia, tremor, ataxia, or chorea. Some patients develop seizures.</description>
        <dbReference type="MIM" id="618425"/>
    </disease>
    <text>The disease is caused by variants affecting the gene represented in this entry.</text>
</comment>
<comment type="similarity">
    <text evidence="7">Belongs to the krueppel C2H2-type zinc-finger protein family.</text>
</comment>
<comment type="sequence caution" evidence="7">
    <conflict type="erroneous initiation">
        <sequence resource="EMBL-CDS" id="BAA13242"/>
    </conflict>
    <text>Extended N-terminus.</text>
</comment>
<feature type="chain" id="PRO_0000047425" description="Zinc finger protein 142">
    <location>
        <begin position="1"/>
        <end position="1687"/>
    </location>
</feature>
<feature type="zinc finger region" description="C2H2-type 1" evidence="1">
    <location>
        <begin position="163"/>
        <end position="185"/>
    </location>
</feature>
<feature type="zinc finger region" description="C2H2-type 2" evidence="1">
    <location>
        <begin position="219"/>
        <end position="242"/>
    </location>
</feature>
<feature type="zinc finger region" description="C2H2-type 3" evidence="1">
    <location>
        <begin position="253"/>
        <end position="275"/>
    </location>
</feature>
<feature type="zinc finger region" description="C2H2-type 4; atypical" evidence="1">
    <location>
        <begin position="286"/>
        <end position="311"/>
    </location>
</feature>
<feature type="zinc finger region" description="C2H2-type 5" evidence="1">
    <location>
        <begin position="316"/>
        <end position="340"/>
    </location>
</feature>
<feature type="zinc finger region" description="C2H2-type 6" evidence="1">
    <location>
        <begin position="343"/>
        <end position="366"/>
    </location>
</feature>
<feature type="zinc finger region" description="C2H2-type 7" evidence="1">
    <location>
        <begin position="372"/>
        <end position="395"/>
    </location>
</feature>
<feature type="zinc finger region" description="C2H2-type 8" evidence="1">
    <location>
        <begin position="401"/>
        <end position="423"/>
    </location>
</feature>
<feature type="zinc finger region" description="C2H2-type 9" evidence="1">
    <location>
        <begin position="429"/>
        <end position="451"/>
    </location>
</feature>
<feature type="zinc finger region" description="C2H2-type 10" evidence="1">
    <location>
        <begin position="457"/>
        <end position="479"/>
    </location>
</feature>
<feature type="zinc finger region" description="C2H2-type 11" evidence="1">
    <location>
        <begin position="485"/>
        <end position="507"/>
    </location>
</feature>
<feature type="zinc finger region" description="C2H2-type 12" evidence="1">
    <location>
        <begin position="512"/>
        <end position="536"/>
    </location>
</feature>
<feature type="zinc finger region" description="C2H2-type 13" evidence="1">
    <location>
        <begin position="544"/>
        <end position="567"/>
    </location>
</feature>
<feature type="zinc finger region" description="C2H2-type 14" evidence="1">
    <location>
        <begin position="573"/>
        <end position="596"/>
    </location>
</feature>
<feature type="zinc finger region" description="C2H2-type 15" evidence="1">
    <location>
        <begin position="1135"/>
        <end position="1158"/>
    </location>
</feature>
<feature type="zinc finger region" description="C2H2-type 16" evidence="1">
    <location>
        <begin position="1171"/>
        <end position="1194"/>
    </location>
</feature>
<feature type="zinc finger region" description="C2H2-type 17" evidence="1">
    <location>
        <begin position="1200"/>
        <end position="1222"/>
    </location>
</feature>
<feature type="zinc finger region" description="C2H2-type 18" evidence="1">
    <location>
        <begin position="1228"/>
        <end position="1251"/>
    </location>
</feature>
<feature type="zinc finger region" description="C2H2-type 19" evidence="1">
    <location>
        <begin position="1257"/>
        <end position="1280"/>
    </location>
</feature>
<feature type="zinc finger region" description="C2H2-type 20" evidence="1">
    <location>
        <begin position="1286"/>
        <end position="1309"/>
    </location>
</feature>
<feature type="zinc finger region" description="C2H2-type 21" evidence="1">
    <location>
        <begin position="1328"/>
        <end position="1351"/>
    </location>
</feature>
<feature type="zinc finger region" description="C2H2-type 22" evidence="1">
    <location>
        <begin position="1354"/>
        <end position="1377"/>
    </location>
</feature>
<feature type="zinc finger region" description="C2H2-type 23" evidence="1">
    <location>
        <begin position="1380"/>
        <end position="1403"/>
    </location>
</feature>
<feature type="zinc finger region" description="C2H2-type 24" evidence="1">
    <location>
        <begin position="1424"/>
        <end position="1446"/>
    </location>
</feature>
<feature type="zinc finger region" description="C2H2-type 25" evidence="1">
    <location>
        <begin position="1452"/>
        <end position="1474"/>
    </location>
</feature>
<feature type="zinc finger region" description="C2H2-type 26" evidence="1">
    <location>
        <begin position="1480"/>
        <end position="1502"/>
    </location>
</feature>
<feature type="zinc finger region" description="C2H2-type 27" evidence="1">
    <location>
        <begin position="1508"/>
        <end position="1530"/>
    </location>
</feature>
<feature type="zinc finger region" description="C2H2-type 28" evidence="1">
    <location>
        <begin position="1536"/>
        <end position="1559"/>
    </location>
</feature>
<feature type="zinc finger region" description="C2H2-type 29" evidence="1">
    <location>
        <begin position="1565"/>
        <end position="1587"/>
    </location>
</feature>
<feature type="zinc finger region" description="C2H2-type 30" evidence="1">
    <location>
        <begin position="1593"/>
        <end position="1615"/>
    </location>
</feature>
<feature type="zinc finger region" description="C2H2-type 31" evidence="1">
    <location>
        <begin position="1621"/>
        <end position="1643"/>
    </location>
</feature>
<feature type="region of interest" description="Disordered" evidence="2">
    <location>
        <begin position="1"/>
        <end position="23"/>
    </location>
</feature>
<feature type="region of interest" description="Disordered" evidence="2">
    <location>
        <begin position="83"/>
        <end position="150"/>
    </location>
</feature>
<feature type="region of interest" description="Disordered" evidence="2">
    <location>
        <begin position="613"/>
        <end position="690"/>
    </location>
</feature>
<feature type="region of interest" description="Disordered" evidence="2">
    <location>
        <begin position="704"/>
        <end position="798"/>
    </location>
</feature>
<feature type="region of interest" description="Disordered" evidence="2">
    <location>
        <begin position="897"/>
        <end position="935"/>
    </location>
</feature>
<feature type="region of interest" description="Disordered" evidence="2">
    <location>
        <begin position="947"/>
        <end position="1014"/>
    </location>
</feature>
<feature type="region of interest" description="Disordered" evidence="2">
    <location>
        <begin position="1052"/>
        <end position="1092"/>
    </location>
</feature>
<feature type="region of interest" description="Disordered" evidence="2">
    <location>
        <begin position="1638"/>
        <end position="1687"/>
    </location>
</feature>
<feature type="compositionally biased region" description="Basic and acidic residues" evidence="2">
    <location>
        <begin position="125"/>
        <end position="140"/>
    </location>
</feature>
<feature type="compositionally biased region" description="Low complexity" evidence="2">
    <location>
        <begin position="725"/>
        <end position="739"/>
    </location>
</feature>
<feature type="compositionally biased region" description="Polar residues" evidence="2">
    <location>
        <begin position="1061"/>
        <end position="1075"/>
    </location>
</feature>
<feature type="compositionally biased region" description="Low complexity" evidence="2">
    <location>
        <begin position="1082"/>
        <end position="1092"/>
    </location>
</feature>
<feature type="modified residue" description="Phosphoserine" evidence="9">
    <location>
        <position position="154"/>
    </location>
</feature>
<feature type="cross-link" description="Glycyl lysine isopeptide (Lys-Gly) (interchain with G-Cter in SUMO2)" evidence="10">
    <location>
        <position position="594"/>
    </location>
</feature>
<feature type="cross-link" description="Glycyl lysine isopeptide (Lys-Gly) (interchain with G-Cter in SUMO2)" evidence="11">
    <location>
        <position position="1193"/>
    </location>
</feature>
<feature type="cross-link" description="Glycyl lysine isopeptide (Lys-Gly) (interchain with G-Cter in SUMO2)" evidence="11">
    <location>
        <position position="1242"/>
    </location>
</feature>
<feature type="cross-link" description="Glycyl lysine isopeptide (Lys-Gly) (interchain with G-Cter in SUMO2)" evidence="11">
    <location>
        <position position="1591"/>
    </location>
</feature>
<feature type="sequence variant" id="VAR_047230" description="In dbSNP:rs3770214." evidence="4">
    <original>S</original>
    <variation>G</variation>
    <location>
        <position position="751"/>
    </location>
</feature>
<feature type="sequence variant" id="VAR_047231" description="In dbSNP:rs3770213.">
    <original>L</original>
    <variation>H</variation>
    <location>
        <position position="956"/>
    </location>
</feature>
<feature type="sequence variant" id="VAR_082094" description="In NEDISHM." evidence="3">
    <location>
        <begin position="1059"/>
        <end position="1687"/>
    </location>
</feature>
<feature type="sequence variant" id="VAR_082095" description="In NEDISHM; dbSNP:rs1275959058." evidence="3">
    <original>C</original>
    <variation>F</variation>
    <location>
        <position position="1233"/>
    </location>
</feature>
<feature type="sequence variant" id="VAR_047232" description="In dbSNP:rs3821033.">
    <original>A</original>
    <variation>T</variation>
    <location>
        <position position="1313"/>
    </location>
</feature>
<feature type="sequence variant" id="VAR_082096" description="In NEDISHM." evidence="3">
    <location>
        <begin position="1395"/>
        <end position="1687"/>
    </location>
</feature>
<feature type="sequence variant" id="VAR_082097" description="In NEDISHM." evidence="3">
    <original>R</original>
    <variation>T</variation>
    <location>
        <position position="1500"/>
    </location>
</feature>
<feature type="sequence conflict" description="In Ref. 2; AAC50265." evidence="7" ref="2">
    <original>TECG</original>
    <variation>LKGS</variation>
    <location>
        <begin position="460"/>
        <end position="463"/>
    </location>
</feature>
<feature type="sequence conflict" description="In Ref. 1; BAA13242." evidence="7" ref="1">
    <original>A</original>
    <variation>S</variation>
    <location>
        <position position="541"/>
    </location>
</feature>